<proteinExistence type="inferred from homology"/>
<dbReference type="EMBL" id="AP006627">
    <property type="protein sequence ID" value="BAD62688.1"/>
    <property type="molecule type" value="Genomic_DNA"/>
</dbReference>
<dbReference type="RefSeq" id="WP_011245009.1">
    <property type="nucleotide sequence ID" value="NC_006582.1"/>
</dbReference>
<dbReference type="SMR" id="Q5WLR7"/>
<dbReference type="STRING" id="66692.ABC0145"/>
<dbReference type="GeneID" id="86924181"/>
<dbReference type="KEGG" id="bcl:ABC0145"/>
<dbReference type="eggNOG" id="COG0048">
    <property type="taxonomic scope" value="Bacteria"/>
</dbReference>
<dbReference type="HOGENOM" id="CLU_104295_1_1_9"/>
<dbReference type="OrthoDB" id="9802366at2"/>
<dbReference type="Proteomes" id="UP000001168">
    <property type="component" value="Chromosome"/>
</dbReference>
<dbReference type="GO" id="GO:0015935">
    <property type="term" value="C:small ribosomal subunit"/>
    <property type="evidence" value="ECO:0007669"/>
    <property type="project" value="InterPro"/>
</dbReference>
<dbReference type="GO" id="GO:0019843">
    <property type="term" value="F:rRNA binding"/>
    <property type="evidence" value="ECO:0007669"/>
    <property type="project" value="UniProtKB-UniRule"/>
</dbReference>
<dbReference type="GO" id="GO:0003735">
    <property type="term" value="F:structural constituent of ribosome"/>
    <property type="evidence" value="ECO:0007669"/>
    <property type="project" value="InterPro"/>
</dbReference>
<dbReference type="GO" id="GO:0000049">
    <property type="term" value="F:tRNA binding"/>
    <property type="evidence" value="ECO:0007669"/>
    <property type="project" value="UniProtKB-UniRule"/>
</dbReference>
<dbReference type="GO" id="GO:0006412">
    <property type="term" value="P:translation"/>
    <property type="evidence" value="ECO:0007669"/>
    <property type="project" value="UniProtKB-UniRule"/>
</dbReference>
<dbReference type="CDD" id="cd03368">
    <property type="entry name" value="Ribosomal_S12"/>
    <property type="match status" value="1"/>
</dbReference>
<dbReference type="FunFam" id="2.40.50.140:FF:000001">
    <property type="entry name" value="30S ribosomal protein S12"/>
    <property type="match status" value="1"/>
</dbReference>
<dbReference type="Gene3D" id="2.40.50.140">
    <property type="entry name" value="Nucleic acid-binding proteins"/>
    <property type="match status" value="1"/>
</dbReference>
<dbReference type="HAMAP" id="MF_00403_B">
    <property type="entry name" value="Ribosomal_uS12_B"/>
    <property type="match status" value="1"/>
</dbReference>
<dbReference type="InterPro" id="IPR012340">
    <property type="entry name" value="NA-bd_OB-fold"/>
</dbReference>
<dbReference type="InterPro" id="IPR006032">
    <property type="entry name" value="Ribosomal_uS12"/>
</dbReference>
<dbReference type="InterPro" id="IPR005679">
    <property type="entry name" value="Ribosomal_uS12_bac"/>
</dbReference>
<dbReference type="NCBIfam" id="TIGR00981">
    <property type="entry name" value="rpsL_bact"/>
    <property type="match status" value="1"/>
</dbReference>
<dbReference type="PANTHER" id="PTHR11652">
    <property type="entry name" value="30S RIBOSOMAL PROTEIN S12 FAMILY MEMBER"/>
    <property type="match status" value="1"/>
</dbReference>
<dbReference type="Pfam" id="PF00164">
    <property type="entry name" value="Ribosom_S12_S23"/>
    <property type="match status" value="1"/>
</dbReference>
<dbReference type="PRINTS" id="PR01034">
    <property type="entry name" value="RIBOSOMALS12"/>
</dbReference>
<dbReference type="SUPFAM" id="SSF50249">
    <property type="entry name" value="Nucleic acid-binding proteins"/>
    <property type="match status" value="1"/>
</dbReference>
<dbReference type="PROSITE" id="PS00055">
    <property type="entry name" value="RIBOSOMAL_S12"/>
    <property type="match status" value="1"/>
</dbReference>
<evidence type="ECO:0000250" key="1"/>
<evidence type="ECO:0000255" key="2">
    <source>
        <dbReference type="HAMAP-Rule" id="MF_00403"/>
    </source>
</evidence>
<evidence type="ECO:0000256" key="3">
    <source>
        <dbReference type="SAM" id="MobiDB-lite"/>
    </source>
</evidence>
<evidence type="ECO:0000305" key="4"/>
<feature type="chain" id="PRO_0000146176" description="Small ribosomal subunit protein uS12">
    <location>
        <begin position="1"/>
        <end position="139"/>
    </location>
</feature>
<feature type="region of interest" description="Disordered" evidence="3">
    <location>
        <begin position="12"/>
        <end position="55"/>
    </location>
</feature>
<feature type="region of interest" description="Disordered" evidence="3">
    <location>
        <begin position="119"/>
        <end position="139"/>
    </location>
</feature>
<feature type="compositionally biased region" description="Polar residues" evidence="3">
    <location>
        <begin position="27"/>
        <end position="42"/>
    </location>
</feature>
<feature type="compositionally biased region" description="Basic residues" evidence="3">
    <location>
        <begin position="130"/>
        <end position="139"/>
    </location>
</feature>
<feature type="modified residue" description="3-methylthioaspartic acid" evidence="1">
    <location>
        <position position="102"/>
    </location>
</feature>
<reference key="1">
    <citation type="submission" date="2003-10" db="EMBL/GenBank/DDBJ databases">
        <title>The complete genome sequence of the alkaliphilic Bacillus clausii KSM-K16.</title>
        <authorList>
            <person name="Takaki Y."/>
            <person name="Kageyama Y."/>
            <person name="Shimamura S."/>
            <person name="Suzuki H."/>
            <person name="Nishi S."/>
            <person name="Hatada Y."/>
            <person name="Kawai S."/>
            <person name="Ito S."/>
            <person name="Horikoshi K."/>
        </authorList>
    </citation>
    <scope>NUCLEOTIDE SEQUENCE [LARGE SCALE GENOMIC DNA]</scope>
    <source>
        <strain>KSM-K16</strain>
    </source>
</reference>
<accession>Q5WLR7</accession>
<keyword id="KW-0488">Methylation</keyword>
<keyword id="KW-1185">Reference proteome</keyword>
<keyword id="KW-0687">Ribonucleoprotein</keyword>
<keyword id="KW-0689">Ribosomal protein</keyword>
<keyword id="KW-0694">RNA-binding</keyword>
<keyword id="KW-0699">rRNA-binding</keyword>
<keyword id="KW-0820">tRNA-binding</keyword>
<protein>
    <recommendedName>
        <fullName evidence="2">Small ribosomal subunit protein uS12</fullName>
    </recommendedName>
    <alternativeName>
        <fullName evidence="4">30S ribosomal protein S12</fullName>
    </alternativeName>
</protein>
<organism>
    <name type="scientific">Shouchella clausii (strain KSM-K16)</name>
    <name type="common">Alkalihalobacillus clausii</name>
    <dbReference type="NCBI Taxonomy" id="66692"/>
    <lineage>
        <taxon>Bacteria</taxon>
        <taxon>Bacillati</taxon>
        <taxon>Bacillota</taxon>
        <taxon>Bacilli</taxon>
        <taxon>Bacillales</taxon>
        <taxon>Bacillaceae</taxon>
        <taxon>Shouchella</taxon>
    </lineage>
</organism>
<sequence>MPTINQLIRKGRVDKVKKSDSPALNKGYNSFKKSQTDVSSPQKRGVCTRVGTMTPKKPNSALRKYARVRLTNQIEVTAYIPGIGHNLQEHSVVLIRGGRVKDLPGVRYHIVRGALDTAGVQNRMQGRSKYGTKKPKDKK</sequence>
<gene>
    <name evidence="2" type="primary">rpsL</name>
    <name type="ordered locus">ABC0145</name>
</gene>
<name>RS12_SHOC1</name>
<comment type="function">
    <text evidence="2">With S4 and S5 plays an important role in translational accuracy.</text>
</comment>
<comment type="function">
    <text evidence="2">Interacts with and stabilizes bases of the 16S rRNA that are involved in tRNA selection in the A site and with the mRNA backbone. Located at the interface of the 30S and 50S subunits, it traverses the body of the 30S subunit contacting proteins on the other side and probably holding the rRNA structure together. The combined cluster of proteins S8, S12 and S17 appears to hold together the shoulder and platform of the 30S subunit.</text>
</comment>
<comment type="subunit">
    <text evidence="2">Part of the 30S ribosomal subunit. Contacts proteins S8 and S17. May interact with IF1 in the 30S initiation complex.</text>
</comment>
<comment type="similarity">
    <text evidence="2">Belongs to the universal ribosomal protein uS12 family.</text>
</comment>